<reference key="1">
    <citation type="journal article" date="1995" name="Science">
        <title>Whole-genome random sequencing and assembly of Haemophilus influenzae Rd.</title>
        <authorList>
            <person name="Fleischmann R.D."/>
            <person name="Adams M.D."/>
            <person name="White O."/>
            <person name="Clayton R.A."/>
            <person name="Kirkness E.F."/>
            <person name="Kerlavage A.R."/>
            <person name="Bult C.J."/>
            <person name="Tomb J.-F."/>
            <person name="Dougherty B.A."/>
            <person name="Merrick J.M."/>
            <person name="McKenney K."/>
            <person name="Sutton G.G."/>
            <person name="FitzHugh W."/>
            <person name="Fields C.A."/>
            <person name="Gocayne J.D."/>
            <person name="Scott J.D."/>
            <person name="Shirley R."/>
            <person name="Liu L.-I."/>
            <person name="Glodek A."/>
            <person name="Kelley J.M."/>
            <person name="Weidman J.F."/>
            <person name="Phillips C.A."/>
            <person name="Spriggs T."/>
            <person name="Hedblom E."/>
            <person name="Cotton M.D."/>
            <person name="Utterback T.R."/>
            <person name="Hanna M.C."/>
            <person name="Nguyen D.T."/>
            <person name="Saudek D.M."/>
            <person name="Brandon R.C."/>
            <person name="Fine L.D."/>
            <person name="Fritchman J.L."/>
            <person name="Fuhrmann J.L."/>
            <person name="Geoghagen N.S.M."/>
            <person name="Gnehm C.L."/>
            <person name="McDonald L.A."/>
            <person name="Small K.V."/>
            <person name="Fraser C.M."/>
            <person name="Smith H.O."/>
            <person name="Venter J.C."/>
        </authorList>
    </citation>
    <scope>NUCLEOTIDE SEQUENCE [LARGE SCALE GENOMIC DNA]</scope>
    <source>
        <strain>ATCC 51907 / DSM 11121 / KW20 / Rd</strain>
    </source>
</reference>
<sequence>MKNIRNFSIIAHIDHGKSTLSDRLIQTCGGLSDREMEAQVLDSMDLERERGITIKAQSVTLNYKAKDGETYQLNFIDTPGHVDFSYEVSRSLAACEGALLVVDAGQGVEAQTLANCYTAIEMDLEVVPILNKIDLPAADPERVAEEIEDIVGIDAMEAVRCSAKTGVGIEDVLEEIVAKIPAPEGDPNAPLQALIIDSWFDNYLGVVSLVRIKNGVLRKGDKIKVMSTGQTYNVDRLGIFTPKQEDTTVLECGEVGWVVCAIKDILGAPVGDTLTHQHNSATEVLPGFKKVKPQVYAGLFPVSSDDYEAFRDALGKLSLNDASLFYEPETSTALGFGFRCGFLGLLHMEIIQERLEREYDLDLITTAPTVIYEVEMTNGEVVYVDSPAKLPPLNNIAEIREPIAECNMLVPQEYLGNVITLCVEKRGVQTNMVYHGNQIALTYEIPMGEVVLDFFDRLKSTSRGYASLDYGFKRFQAADMVRVDIMINSERVDALALIVHKDNSQYRGRELVEKMRELIPRQQFDIAIQAAIGNHIIARSTVKQLRKNVLAKCYGGDVSRKKKLLQKQKEGKKRMKSLGNVEVPQEAFLAILHVGKDK</sequence>
<comment type="function">
    <text evidence="1">Required for accurate and efficient protein synthesis under certain stress conditions. May act as a fidelity factor of the translation reaction, by catalyzing a one-codon backward translocation of tRNAs on improperly translocated ribosomes. Back-translocation proceeds from a post-translocation (POST) complex to a pre-translocation (PRE) complex, thus giving elongation factor G a second chance to translocate the tRNAs correctly. Binds to ribosomes in a GTP-dependent manner.</text>
</comment>
<comment type="catalytic activity">
    <reaction evidence="1">
        <text>GTP + H2O = GDP + phosphate + H(+)</text>
        <dbReference type="Rhea" id="RHEA:19669"/>
        <dbReference type="ChEBI" id="CHEBI:15377"/>
        <dbReference type="ChEBI" id="CHEBI:15378"/>
        <dbReference type="ChEBI" id="CHEBI:37565"/>
        <dbReference type="ChEBI" id="CHEBI:43474"/>
        <dbReference type="ChEBI" id="CHEBI:58189"/>
        <dbReference type="EC" id="3.6.5.n1"/>
    </reaction>
</comment>
<comment type="subcellular location">
    <subcellularLocation>
        <location evidence="1">Cell inner membrane</location>
        <topology evidence="1">Peripheral membrane protein</topology>
        <orientation evidence="1">Cytoplasmic side</orientation>
    </subcellularLocation>
</comment>
<comment type="similarity">
    <text evidence="1">Belongs to the TRAFAC class translation factor GTPase superfamily. Classic translation factor GTPase family. LepA subfamily.</text>
</comment>
<name>LEPA_HAEIN</name>
<organism>
    <name type="scientific">Haemophilus influenzae (strain ATCC 51907 / DSM 11121 / KW20 / Rd)</name>
    <dbReference type="NCBI Taxonomy" id="71421"/>
    <lineage>
        <taxon>Bacteria</taxon>
        <taxon>Pseudomonadati</taxon>
        <taxon>Pseudomonadota</taxon>
        <taxon>Gammaproteobacteria</taxon>
        <taxon>Pasteurellales</taxon>
        <taxon>Pasteurellaceae</taxon>
        <taxon>Haemophilus</taxon>
    </lineage>
</organism>
<gene>
    <name evidence="1" type="primary">lepA</name>
    <name type="ordered locus">HI_0016</name>
</gene>
<proteinExistence type="inferred from homology"/>
<dbReference type="EC" id="3.6.5.n1" evidence="1"/>
<dbReference type="EMBL" id="L42023">
    <property type="protein sequence ID" value="AAC21694.1"/>
    <property type="molecule type" value="Genomic_DNA"/>
</dbReference>
<dbReference type="PIR" id="I64042">
    <property type="entry name" value="I64042"/>
</dbReference>
<dbReference type="RefSeq" id="NP_438189.1">
    <property type="nucleotide sequence ID" value="NC_000907.1"/>
</dbReference>
<dbReference type="SMR" id="P43729"/>
<dbReference type="STRING" id="71421.HI_0016"/>
<dbReference type="EnsemblBacteria" id="AAC21694">
    <property type="protein sequence ID" value="AAC21694"/>
    <property type="gene ID" value="HI_0016"/>
</dbReference>
<dbReference type="KEGG" id="hin:HI_0016"/>
<dbReference type="PATRIC" id="fig|71421.8.peg.16"/>
<dbReference type="eggNOG" id="COG0481">
    <property type="taxonomic scope" value="Bacteria"/>
</dbReference>
<dbReference type="HOGENOM" id="CLU_009995_3_3_6"/>
<dbReference type="OrthoDB" id="9804431at2"/>
<dbReference type="PhylomeDB" id="P43729"/>
<dbReference type="BioCyc" id="HINF71421:G1GJ1-16-MONOMER"/>
<dbReference type="Proteomes" id="UP000000579">
    <property type="component" value="Chromosome"/>
</dbReference>
<dbReference type="GO" id="GO:0005886">
    <property type="term" value="C:plasma membrane"/>
    <property type="evidence" value="ECO:0007669"/>
    <property type="project" value="UniProtKB-SubCell"/>
</dbReference>
<dbReference type="GO" id="GO:0005525">
    <property type="term" value="F:GTP binding"/>
    <property type="evidence" value="ECO:0007669"/>
    <property type="project" value="UniProtKB-UniRule"/>
</dbReference>
<dbReference type="GO" id="GO:0003924">
    <property type="term" value="F:GTPase activity"/>
    <property type="evidence" value="ECO:0007669"/>
    <property type="project" value="UniProtKB-UniRule"/>
</dbReference>
<dbReference type="GO" id="GO:0097216">
    <property type="term" value="F:guanosine tetraphosphate binding"/>
    <property type="evidence" value="ECO:0007669"/>
    <property type="project" value="UniProtKB-ARBA"/>
</dbReference>
<dbReference type="GO" id="GO:0043022">
    <property type="term" value="F:ribosome binding"/>
    <property type="evidence" value="ECO:0000318"/>
    <property type="project" value="GO_Central"/>
</dbReference>
<dbReference type="GO" id="GO:0003746">
    <property type="term" value="F:translation elongation factor activity"/>
    <property type="evidence" value="ECO:0007669"/>
    <property type="project" value="UniProtKB-UniRule"/>
</dbReference>
<dbReference type="GO" id="GO:0045727">
    <property type="term" value="P:positive regulation of translation"/>
    <property type="evidence" value="ECO:0000318"/>
    <property type="project" value="GO_Central"/>
</dbReference>
<dbReference type="CDD" id="cd03699">
    <property type="entry name" value="EF4_II"/>
    <property type="match status" value="1"/>
</dbReference>
<dbReference type="CDD" id="cd16260">
    <property type="entry name" value="EF4_III"/>
    <property type="match status" value="1"/>
</dbReference>
<dbReference type="CDD" id="cd01890">
    <property type="entry name" value="LepA"/>
    <property type="match status" value="1"/>
</dbReference>
<dbReference type="CDD" id="cd03709">
    <property type="entry name" value="lepA_C"/>
    <property type="match status" value="1"/>
</dbReference>
<dbReference type="FunFam" id="3.30.70.240:FF:000005">
    <property type="entry name" value="Elongation factor 4"/>
    <property type="match status" value="1"/>
</dbReference>
<dbReference type="FunFam" id="3.40.50.300:FF:000078">
    <property type="entry name" value="Elongation factor 4"/>
    <property type="match status" value="1"/>
</dbReference>
<dbReference type="FunFam" id="2.40.30.10:FF:000015">
    <property type="entry name" value="Translation factor GUF1, mitochondrial"/>
    <property type="match status" value="1"/>
</dbReference>
<dbReference type="FunFam" id="3.30.70.2570:FF:000001">
    <property type="entry name" value="Translation factor GUF1, mitochondrial"/>
    <property type="match status" value="1"/>
</dbReference>
<dbReference type="FunFam" id="3.30.70.870:FF:000004">
    <property type="entry name" value="Translation factor GUF1, mitochondrial"/>
    <property type="match status" value="1"/>
</dbReference>
<dbReference type="Gene3D" id="3.30.70.240">
    <property type="match status" value="1"/>
</dbReference>
<dbReference type="Gene3D" id="3.30.70.2570">
    <property type="entry name" value="Elongation factor 4, C-terminal domain"/>
    <property type="match status" value="1"/>
</dbReference>
<dbReference type="Gene3D" id="3.30.70.870">
    <property type="entry name" value="Elongation Factor G (Translational Gtpase), domain 3"/>
    <property type="match status" value="1"/>
</dbReference>
<dbReference type="Gene3D" id="3.40.50.300">
    <property type="entry name" value="P-loop containing nucleotide triphosphate hydrolases"/>
    <property type="match status" value="1"/>
</dbReference>
<dbReference type="Gene3D" id="2.40.30.10">
    <property type="entry name" value="Translation factors"/>
    <property type="match status" value="1"/>
</dbReference>
<dbReference type="HAMAP" id="MF_00071">
    <property type="entry name" value="LepA"/>
    <property type="match status" value="1"/>
</dbReference>
<dbReference type="InterPro" id="IPR006297">
    <property type="entry name" value="EF-4"/>
</dbReference>
<dbReference type="InterPro" id="IPR035647">
    <property type="entry name" value="EFG_III/V"/>
</dbReference>
<dbReference type="InterPro" id="IPR000640">
    <property type="entry name" value="EFG_V-like"/>
</dbReference>
<dbReference type="InterPro" id="IPR004161">
    <property type="entry name" value="EFTu-like_2"/>
</dbReference>
<dbReference type="InterPro" id="IPR031157">
    <property type="entry name" value="G_TR_CS"/>
</dbReference>
<dbReference type="InterPro" id="IPR038363">
    <property type="entry name" value="LepA_C_sf"/>
</dbReference>
<dbReference type="InterPro" id="IPR013842">
    <property type="entry name" value="LepA_CTD"/>
</dbReference>
<dbReference type="InterPro" id="IPR035654">
    <property type="entry name" value="LepA_IV"/>
</dbReference>
<dbReference type="InterPro" id="IPR027417">
    <property type="entry name" value="P-loop_NTPase"/>
</dbReference>
<dbReference type="InterPro" id="IPR005225">
    <property type="entry name" value="Small_GTP-bd"/>
</dbReference>
<dbReference type="InterPro" id="IPR000795">
    <property type="entry name" value="T_Tr_GTP-bd_dom"/>
</dbReference>
<dbReference type="NCBIfam" id="TIGR01393">
    <property type="entry name" value="lepA"/>
    <property type="match status" value="1"/>
</dbReference>
<dbReference type="NCBIfam" id="TIGR00231">
    <property type="entry name" value="small_GTP"/>
    <property type="match status" value="1"/>
</dbReference>
<dbReference type="PANTHER" id="PTHR43512:SF4">
    <property type="entry name" value="TRANSLATION FACTOR GUF1 HOMOLOG, CHLOROPLASTIC"/>
    <property type="match status" value="1"/>
</dbReference>
<dbReference type="PANTHER" id="PTHR43512">
    <property type="entry name" value="TRANSLATION FACTOR GUF1-RELATED"/>
    <property type="match status" value="1"/>
</dbReference>
<dbReference type="Pfam" id="PF00679">
    <property type="entry name" value="EFG_C"/>
    <property type="match status" value="1"/>
</dbReference>
<dbReference type="Pfam" id="PF00009">
    <property type="entry name" value="GTP_EFTU"/>
    <property type="match status" value="1"/>
</dbReference>
<dbReference type="Pfam" id="PF03144">
    <property type="entry name" value="GTP_EFTU_D2"/>
    <property type="match status" value="1"/>
</dbReference>
<dbReference type="Pfam" id="PF06421">
    <property type="entry name" value="LepA_C"/>
    <property type="match status" value="1"/>
</dbReference>
<dbReference type="PRINTS" id="PR00315">
    <property type="entry name" value="ELONGATNFCT"/>
</dbReference>
<dbReference type="SUPFAM" id="SSF54980">
    <property type="entry name" value="EF-G C-terminal domain-like"/>
    <property type="match status" value="2"/>
</dbReference>
<dbReference type="SUPFAM" id="SSF52540">
    <property type="entry name" value="P-loop containing nucleoside triphosphate hydrolases"/>
    <property type="match status" value="1"/>
</dbReference>
<dbReference type="PROSITE" id="PS00301">
    <property type="entry name" value="G_TR_1"/>
    <property type="match status" value="1"/>
</dbReference>
<dbReference type="PROSITE" id="PS51722">
    <property type="entry name" value="G_TR_2"/>
    <property type="match status" value="1"/>
</dbReference>
<accession>P43729</accession>
<keyword id="KW-0997">Cell inner membrane</keyword>
<keyword id="KW-1003">Cell membrane</keyword>
<keyword id="KW-0342">GTP-binding</keyword>
<keyword id="KW-0378">Hydrolase</keyword>
<keyword id="KW-0472">Membrane</keyword>
<keyword id="KW-0547">Nucleotide-binding</keyword>
<keyword id="KW-0648">Protein biosynthesis</keyword>
<keyword id="KW-1185">Reference proteome</keyword>
<protein>
    <recommendedName>
        <fullName evidence="1">Elongation factor 4</fullName>
        <shortName evidence="1">EF-4</shortName>
        <ecNumber evidence="1">3.6.5.n1</ecNumber>
    </recommendedName>
    <alternativeName>
        <fullName evidence="1">Ribosomal back-translocase LepA</fullName>
    </alternativeName>
</protein>
<evidence type="ECO:0000255" key="1">
    <source>
        <dbReference type="HAMAP-Rule" id="MF_00071"/>
    </source>
</evidence>
<feature type="chain" id="PRO_0000176280" description="Elongation factor 4">
    <location>
        <begin position="1"/>
        <end position="598"/>
    </location>
</feature>
<feature type="domain" description="tr-type G">
    <location>
        <begin position="2"/>
        <end position="184"/>
    </location>
</feature>
<feature type="binding site" evidence="1">
    <location>
        <begin position="14"/>
        <end position="19"/>
    </location>
    <ligand>
        <name>GTP</name>
        <dbReference type="ChEBI" id="CHEBI:37565"/>
    </ligand>
</feature>
<feature type="binding site" evidence="1">
    <location>
        <begin position="131"/>
        <end position="134"/>
    </location>
    <ligand>
        <name>GTP</name>
        <dbReference type="ChEBI" id="CHEBI:37565"/>
    </ligand>
</feature>